<evidence type="ECO:0000255" key="1">
    <source>
        <dbReference type="HAMAP-Rule" id="MF_01702"/>
    </source>
</evidence>
<name>PSTB_RHOJR</name>
<feature type="chain" id="PRO_0000272511" description="Phosphate import ATP-binding protein PstB">
    <location>
        <begin position="1"/>
        <end position="258"/>
    </location>
</feature>
<feature type="domain" description="ABC transporter" evidence="1">
    <location>
        <begin position="5"/>
        <end position="247"/>
    </location>
</feature>
<feature type="binding site" evidence="1">
    <location>
        <begin position="37"/>
        <end position="44"/>
    </location>
    <ligand>
        <name>ATP</name>
        <dbReference type="ChEBI" id="CHEBI:30616"/>
    </ligand>
</feature>
<organism>
    <name type="scientific">Rhodococcus jostii (strain RHA1)</name>
    <dbReference type="NCBI Taxonomy" id="101510"/>
    <lineage>
        <taxon>Bacteria</taxon>
        <taxon>Bacillati</taxon>
        <taxon>Actinomycetota</taxon>
        <taxon>Actinomycetes</taxon>
        <taxon>Mycobacteriales</taxon>
        <taxon>Nocardiaceae</taxon>
        <taxon>Rhodococcus</taxon>
    </lineage>
</organism>
<accession>Q0S736</accession>
<comment type="function">
    <text evidence="1">Part of the ABC transporter complex PstSACB involved in phosphate import. Responsible for energy coupling to the transport system.</text>
</comment>
<comment type="catalytic activity">
    <reaction evidence="1">
        <text>phosphate(out) + ATP + H2O = ADP + 2 phosphate(in) + H(+)</text>
        <dbReference type="Rhea" id="RHEA:24440"/>
        <dbReference type="ChEBI" id="CHEBI:15377"/>
        <dbReference type="ChEBI" id="CHEBI:15378"/>
        <dbReference type="ChEBI" id="CHEBI:30616"/>
        <dbReference type="ChEBI" id="CHEBI:43474"/>
        <dbReference type="ChEBI" id="CHEBI:456216"/>
        <dbReference type="EC" id="7.3.2.1"/>
    </reaction>
</comment>
<comment type="subunit">
    <text evidence="1">The complex is composed of two ATP-binding proteins (PstB), two transmembrane proteins (PstC and PstA) and a solute-binding protein (PstS).</text>
</comment>
<comment type="subcellular location">
    <subcellularLocation>
        <location evidence="1">Cell membrane</location>
        <topology evidence="1">Peripheral membrane protein</topology>
    </subcellularLocation>
</comment>
<comment type="similarity">
    <text evidence="1">Belongs to the ABC transporter superfamily. Phosphate importer (TC 3.A.1.7) family.</text>
</comment>
<dbReference type="EC" id="7.3.2.1" evidence="1"/>
<dbReference type="EMBL" id="CP000431">
    <property type="protein sequence ID" value="ABG96650.1"/>
    <property type="molecule type" value="Genomic_DNA"/>
</dbReference>
<dbReference type="RefSeq" id="WP_007301060.1">
    <property type="nucleotide sequence ID" value="NC_008268.1"/>
</dbReference>
<dbReference type="SMR" id="Q0S736"/>
<dbReference type="KEGG" id="rha:RHA1_ro04865"/>
<dbReference type="eggNOG" id="COG1117">
    <property type="taxonomic scope" value="Bacteria"/>
</dbReference>
<dbReference type="HOGENOM" id="CLU_000604_1_22_11"/>
<dbReference type="OrthoDB" id="4398079at2"/>
<dbReference type="Proteomes" id="UP000008710">
    <property type="component" value="Chromosome"/>
</dbReference>
<dbReference type="GO" id="GO:0005886">
    <property type="term" value="C:plasma membrane"/>
    <property type="evidence" value="ECO:0007669"/>
    <property type="project" value="UniProtKB-SubCell"/>
</dbReference>
<dbReference type="GO" id="GO:0005524">
    <property type="term" value="F:ATP binding"/>
    <property type="evidence" value="ECO:0007669"/>
    <property type="project" value="UniProtKB-KW"/>
</dbReference>
<dbReference type="GO" id="GO:0016887">
    <property type="term" value="F:ATP hydrolysis activity"/>
    <property type="evidence" value="ECO:0007669"/>
    <property type="project" value="InterPro"/>
</dbReference>
<dbReference type="GO" id="GO:0015415">
    <property type="term" value="F:ATPase-coupled phosphate ion transmembrane transporter activity"/>
    <property type="evidence" value="ECO:0007669"/>
    <property type="project" value="UniProtKB-EC"/>
</dbReference>
<dbReference type="GO" id="GO:0035435">
    <property type="term" value="P:phosphate ion transmembrane transport"/>
    <property type="evidence" value="ECO:0007669"/>
    <property type="project" value="InterPro"/>
</dbReference>
<dbReference type="CDD" id="cd03260">
    <property type="entry name" value="ABC_PstB_phosphate_transporter"/>
    <property type="match status" value="1"/>
</dbReference>
<dbReference type="FunFam" id="3.40.50.300:FF:000132">
    <property type="entry name" value="Phosphate import ATP-binding protein PstB"/>
    <property type="match status" value="1"/>
</dbReference>
<dbReference type="Gene3D" id="3.40.50.300">
    <property type="entry name" value="P-loop containing nucleotide triphosphate hydrolases"/>
    <property type="match status" value="1"/>
</dbReference>
<dbReference type="InterPro" id="IPR003593">
    <property type="entry name" value="AAA+_ATPase"/>
</dbReference>
<dbReference type="InterPro" id="IPR003439">
    <property type="entry name" value="ABC_transporter-like_ATP-bd"/>
</dbReference>
<dbReference type="InterPro" id="IPR017871">
    <property type="entry name" value="ABC_transporter-like_CS"/>
</dbReference>
<dbReference type="InterPro" id="IPR027417">
    <property type="entry name" value="P-loop_NTPase"/>
</dbReference>
<dbReference type="InterPro" id="IPR005670">
    <property type="entry name" value="PstB-like"/>
</dbReference>
<dbReference type="NCBIfam" id="TIGR00972">
    <property type="entry name" value="3a0107s01c2"/>
    <property type="match status" value="1"/>
</dbReference>
<dbReference type="PANTHER" id="PTHR43423">
    <property type="entry name" value="ABC TRANSPORTER I FAMILY MEMBER 17"/>
    <property type="match status" value="1"/>
</dbReference>
<dbReference type="PANTHER" id="PTHR43423:SF1">
    <property type="entry name" value="ABC TRANSPORTER I FAMILY MEMBER 17"/>
    <property type="match status" value="1"/>
</dbReference>
<dbReference type="Pfam" id="PF00005">
    <property type="entry name" value="ABC_tran"/>
    <property type="match status" value="1"/>
</dbReference>
<dbReference type="SMART" id="SM00382">
    <property type="entry name" value="AAA"/>
    <property type="match status" value="1"/>
</dbReference>
<dbReference type="SUPFAM" id="SSF52540">
    <property type="entry name" value="P-loop containing nucleoside triphosphate hydrolases"/>
    <property type="match status" value="1"/>
</dbReference>
<dbReference type="PROSITE" id="PS00211">
    <property type="entry name" value="ABC_TRANSPORTER_1"/>
    <property type="match status" value="1"/>
</dbReference>
<dbReference type="PROSITE" id="PS50893">
    <property type="entry name" value="ABC_TRANSPORTER_2"/>
    <property type="match status" value="1"/>
</dbReference>
<dbReference type="PROSITE" id="PS51238">
    <property type="entry name" value="PSTB"/>
    <property type="match status" value="1"/>
</dbReference>
<protein>
    <recommendedName>
        <fullName evidence="1">Phosphate import ATP-binding protein PstB</fullName>
        <ecNumber evidence="1">7.3.2.1</ecNumber>
    </recommendedName>
    <alternativeName>
        <fullName evidence="1">ABC phosphate transporter</fullName>
    </alternativeName>
    <alternativeName>
        <fullName evidence="1">Phosphate-transporting ATPase</fullName>
    </alternativeName>
</protein>
<proteinExistence type="inferred from homology"/>
<gene>
    <name evidence="1" type="primary">pstB</name>
    <name type="ordered locus">RHA1_ro04865</name>
</gene>
<reference key="1">
    <citation type="journal article" date="2006" name="Proc. Natl. Acad. Sci. U.S.A.">
        <title>The complete genome of Rhodococcus sp. RHA1 provides insights into a catabolic powerhouse.</title>
        <authorList>
            <person name="McLeod M.P."/>
            <person name="Warren R.L."/>
            <person name="Hsiao W.W.L."/>
            <person name="Araki N."/>
            <person name="Myhre M."/>
            <person name="Fernandes C."/>
            <person name="Miyazawa D."/>
            <person name="Wong W."/>
            <person name="Lillquist A.L."/>
            <person name="Wang D."/>
            <person name="Dosanjh M."/>
            <person name="Hara H."/>
            <person name="Petrescu A."/>
            <person name="Morin R.D."/>
            <person name="Yang G."/>
            <person name="Stott J.M."/>
            <person name="Schein J.E."/>
            <person name="Shin H."/>
            <person name="Smailus D."/>
            <person name="Siddiqui A.S."/>
            <person name="Marra M.A."/>
            <person name="Jones S.J.M."/>
            <person name="Holt R."/>
            <person name="Brinkman F.S.L."/>
            <person name="Miyauchi K."/>
            <person name="Fukuda M."/>
            <person name="Davies J.E."/>
            <person name="Mohn W.W."/>
            <person name="Eltis L.D."/>
        </authorList>
    </citation>
    <scope>NUCLEOTIDE SEQUENCE [LARGE SCALE GENOMIC DNA]</scope>
    <source>
        <strain>RHA1</strain>
    </source>
</reference>
<sequence length="258" mass="28096">MAKRLDLKDVNIYYGKFHAVADVGLSVPPRNVTAFIGPSGCGKSTVLRSLNRMHEVTPGARVEGSILLDGEDIYGSGIDPVGVRKTIGMVFQRPNPFPTMSIKDNVVAGLKLQGERSKKRLDEVAERSLRGANLWTEVKDRLDKPGGGLSGGQQQRLCIARAIAVSPDVLLMDEPCSALDPISTLAIEDLITELKKDFTIVIVTHNMQQAARVSDQTAFFNLEATGKPGRLVEIDDTEKIFSNPTQKATEDYISGRFG</sequence>
<keyword id="KW-0067">ATP-binding</keyword>
<keyword id="KW-1003">Cell membrane</keyword>
<keyword id="KW-0472">Membrane</keyword>
<keyword id="KW-0547">Nucleotide-binding</keyword>
<keyword id="KW-0592">Phosphate transport</keyword>
<keyword id="KW-1278">Translocase</keyword>
<keyword id="KW-0813">Transport</keyword>